<gene>
    <name type="primary">Cenpn</name>
</gene>
<name>CENPN_RAT</name>
<reference key="1">
    <citation type="journal article" date="2004" name="Genome Res.">
        <title>The status, quality, and expansion of the NIH full-length cDNA project: the Mammalian Gene Collection (MGC).</title>
        <authorList>
            <consortium name="The MGC Project Team"/>
        </authorList>
    </citation>
    <scope>NUCLEOTIDE SEQUENCE [LARGE SCALE MRNA]</scope>
    <source>
        <tissue>Testis</tissue>
    </source>
</reference>
<dbReference type="EMBL" id="BC085839">
    <property type="protein sequence ID" value="AAH85839.1"/>
    <property type="molecule type" value="mRNA"/>
</dbReference>
<dbReference type="RefSeq" id="NP_001008367.1">
    <property type="nucleotide sequence ID" value="NM_001008366.1"/>
</dbReference>
<dbReference type="RefSeq" id="XP_006255748.1">
    <property type="nucleotide sequence ID" value="XM_006255686.5"/>
</dbReference>
<dbReference type="RefSeq" id="XP_006255749.1">
    <property type="nucleotide sequence ID" value="XM_006255687.5"/>
</dbReference>
<dbReference type="RefSeq" id="XP_006255751.1">
    <property type="nucleotide sequence ID" value="XM_006255689.5"/>
</dbReference>
<dbReference type="RefSeq" id="XP_006255752.1">
    <property type="nucleotide sequence ID" value="XM_006255690.3"/>
</dbReference>
<dbReference type="RefSeq" id="XP_038953796.1">
    <property type="nucleotide sequence ID" value="XM_039097868.2"/>
</dbReference>
<dbReference type="RefSeq" id="XP_038953797.1">
    <property type="nucleotide sequence ID" value="XM_039097869.2"/>
</dbReference>
<dbReference type="RefSeq" id="XP_038953798.1">
    <property type="nucleotide sequence ID" value="XM_039097870.2"/>
</dbReference>
<dbReference type="SMR" id="Q5U2W4"/>
<dbReference type="FunCoup" id="Q5U2W4">
    <property type="interactions" value="947"/>
</dbReference>
<dbReference type="PhosphoSitePlus" id="Q5U2W4"/>
<dbReference type="Ensembl" id="ENSRNOT00000015158.7">
    <property type="protein sequence ID" value="ENSRNOP00000015158.5"/>
    <property type="gene ID" value="ENSRNOG00000011296.9"/>
</dbReference>
<dbReference type="GeneID" id="361416"/>
<dbReference type="KEGG" id="rno:361416"/>
<dbReference type="UCSC" id="RGD:1310953">
    <property type="organism name" value="rat"/>
</dbReference>
<dbReference type="AGR" id="RGD:1310953"/>
<dbReference type="CTD" id="55839"/>
<dbReference type="RGD" id="1310953">
    <property type="gene designation" value="Cenpn"/>
</dbReference>
<dbReference type="GeneTree" id="ENSGT00390000004738"/>
<dbReference type="InParanoid" id="Q5U2W4"/>
<dbReference type="OMA" id="WSVYQMK"/>
<dbReference type="Reactome" id="R-RNO-141444">
    <property type="pathway name" value="Amplification of signal from unattached kinetochores via a MAD2 inhibitory signal"/>
</dbReference>
<dbReference type="Reactome" id="R-RNO-2467813">
    <property type="pathway name" value="Separation of Sister Chromatids"/>
</dbReference>
<dbReference type="Reactome" id="R-RNO-2500257">
    <property type="pathway name" value="Resolution of Sister Chromatid Cohesion"/>
</dbReference>
<dbReference type="Reactome" id="R-RNO-5663220">
    <property type="pathway name" value="RHO GTPases Activate Formins"/>
</dbReference>
<dbReference type="Reactome" id="R-RNO-606279">
    <property type="pathway name" value="Deposition of new CENPA-containing nucleosomes at the centromere"/>
</dbReference>
<dbReference type="Reactome" id="R-RNO-68877">
    <property type="pathway name" value="Mitotic Prometaphase"/>
</dbReference>
<dbReference type="Reactome" id="R-RNO-9648025">
    <property type="pathway name" value="EML4 and NUDC in mitotic spindle formation"/>
</dbReference>
<dbReference type="PRO" id="PR:Q5U2W4"/>
<dbReference type="Proteomes" id="UP000002494">
    <property type="component" value="Chromosome 19"/>
</dbReference>
<dbReference type="Bgee" id="ENSRNOG00000011296">
    <property type="expression patterns" value="Expressed in testis and 19 other cell types or tissues"/>
</dbReference>
<dbReference type="ExpressionAtlas" id="Q5U2W4">
    <property type="expression patterns" value="baseline and differential"/>
</dbReference>
<dbReference type="GO" id="GO:0000939">
    <property type="term" value="C:inner kinetochore"/>
    <property type="evidence" value="ECO:0000266"/>
    <property type="project" value="RGD"/>
</dbReference>
<dbReference type="GO" id="GO:0005654">
    <property type="term" value="C:nucleoplasm"/>
    <property type="evidence" value="ECO:0000318"/>
    <property type="project" value="GO_Central"/>
</dbReference>
<dbReference type="GO" id="GO:0034080">
    <property type="term" value="P:CENP-A containing chromatin assembly"/>
    <property type="evidence" value="ECO:0007669"/>
    <property type="project" value="InterPro"/>
</dbReference>
<dbReference type="GO" id="GO:0007059">
    <property type="term" value="P:chromosome segregation"/>
    <property type="evidence" value="ECO:0007669"/>
    <property type="project" value="InterPro"/>
</dbReference>
<dbReference type="InterPro" id="IPR052011">
    <property type="entry name" value="CENP-NAC/CAD_complex"/>
</dbReference>
<dbReference type="InterPro" id="IPR007902">
    <property type="entry name" value="Chl4/mis15/CENP-N"/>
</dbReference>
<dbReference type="PANTHER" id="PTHR46790">
    <property type="entry name" value="CENTROMERE PROTEIN N"/>
    <property type="match status" value="1"/>
</dbReference>
<dbReference type="PANTHER" id="PTHR46790:SF1">
    <property type="entry name" value="CENTROMERE PROTEIN N"/>
    <property type="match status" value="1"/>
</dbReference>
<dbReference type="Pfam" id="PF05238">
    <property type="entry name" value="CENP-N"/>
    <property type="match status" value="1"/>
</dbReference>
<protein>
    <recommendedName>
        <fullName>Centromere protein N</fullName>
        <shortName>CENP-N</shortName>
    </recommendedName>
</protein>
<evidence type="ECO:0000250" key="1"/>
<evidence type="ECO:0000250" key="2">
    <source>
        <dbReference type="UniProtKB" id="Q96H22"/>
    </source>
</evidence>
<evidence type="ECO:0000305" key="3"/>
<organism>
    <name type="scientific">Rattus norvegicus</name>
    <name type="common">Rat</name>
    <dbReference type="NCBI Taxonomy" id="10116"/>
    <lineage>
        <taxon>Eukaryota</taxon>
        <taxon>Metazoa</taxon>
        <taxon>Chordata</taxon>
        <taxon>Craniata</taxon>
        <taxon>Vertebrata</taxon>
        <taxon>Euteleostomi</taxon>
        <taxon>Mammalia</taxon>
        <taxon>Eutheria</taxon>
        <taxon>Euarchontoglires</taxon>
        <taxon>Glires</taxon>
        <taxon>Rodentia</taxon>
        <taxon>Myomorpha</taxon>
        <taxon>Muroidea</taxon>
        <taxon>Muridae</taxon>
        <taxon>Murinae</taxon>
        <taxon>Rattus</taxon>
    </lineage>
</organism>
<feature type="chain" id="PRO_0000249496" description="Centromere protein N">
    <location>
        <begin position="1"/>
        <end position="340"/>
    </location>
</feature>
<feature type="modified residue" description="Phosphoserine" evidence="2">
    <location>
        <position position="227"/>
    </location>
</feature>
<feature type="modified residue" description="Phosphoserine" evidence="2">
    <location>
        <position position="236"/>
    </location>
</feature>
<keyword id="KW-0137">Centromere</keyword>
<keyword id="KW-0158">Chromosome</keyword>
<keyword id="KW-0995">Kinetochore</keyword>
<keyword id="KW-0539">Nucleus</keyword>
<keyword id="KW-0597">Phosphoprotein</keyword>
<keyword id="KW-1185">Reference proteome</keyword>
<accession>Q5U2W4</accession>
<comment type="function">
    <text evidence="2">Component of the CENPA-NAC (nucleosome-associated) complex, a complex that plays a central role in assembly of kinetochore proteins, mitotic progression and chromosome segregation. The CENPA-NAC complex recruits the CENPA-CAD (nucleosome distal) complex and may be involved in incorporation of newly synthesized CENPA into centromeres. CENPN is the first protein to bind specifically to CENPA nucleosomes and the direct binding of CENPA nucleosomes by CENPN is required for centromere assembly. Required for chromosome congression and efficiently align the chromosomes on a metaphase plate.</text>
</comment>
<comment type="subunit">
    <text evidence="2">Component of the CENPA-NAC complex, at least composed of CENPA, CENPC, CENPH, CENPM, CENPN, CENPT and CENPU. The CENPA-NAC complex interacts with the CENPA-CAD complex, composed of CENPI, CENPK, CENPL, CENPO, CENPP, CENPQ, CENPR and CENPS. Interacts directly with CENPA. Identified in a centromere complex containing histones H2A, H2B and H4, and at least CENPA, CENPB, CENPC, CENPT, CENPN, HJURP, SUPT16H, SSRP1 and RSF1.</text>
</comment>
<comment type="subcellular location">
    <subcellularLocation>
        <location evidence="1">Nucleus</location>
    </subcellularLocation>
    <subcellularLocation>
        <location evidence="1">Chromosome</location>
        <location evidence="1">Centromere</location>
    </subcellularLocation>
    <subcellularLocation>
        <location evidence="1">Chromosome</location>
        <location evidence="1">Centromere</location>
        <location evidence="1">Kinetochore</location>
    </subcellularLocation>
    <text evidence="1">Localizes exclusively in the kinetochore domain of centromeres. Kinetochore-bound levels decrease when cells enter mitosis and increase again when cells exit mitosis.</text>
</comment>
<comment type="similarity">
    <text evidence="3">Belongs to the CENP-N/CHL4 family.</text>
</comment>
<sequence length="340" mass="39459">MDENVAEFLRRIILKIPLCEMKTILEAWDFLSEDQLQSINLKQRKEFLAQEVILLCEDKCASLDDMALLDLMYTQFHRHQKLWNVFQMSKEPGGNDVDLFDMEQFQSSFKRILQRALKNVTVSFRVYEKNSVWIRVAWGTQYSQPNQYKPTFVVYYPQTPYVFISSCYLKSTVPLLHQALKVASKHHQMAQLDLRSRHLDSLTAIVFNEYDQTFENYNSTASWREGSLGLKTDLDSKIIHENTEEKVRIHRATQEAFGAYPQPQLEFAQYKLETKFKSDVGGGILADRKEPLRCLVKFSSPHLLEALKSLAPAGIADTPLSPLLTCIPSKKMNYFKIRDK</sequence>
<proteinExistence type="evidence at transcript level"/>